<comment type="function">
    <text evidence="4">May only reduce GSH-thiol disulfides, but not protein disulfides.</text>
</comment>
<comment type="subcellular location">
    <subcellularLocation>
        <location evidence="1">Cytoplasm</location>
    </subcellularLocation>
    <subcellularLocation>
        <location evidence="1">Nucleus</location>
    </subcellularLocation>
</comment>
<comment type="similarity">
    <text evidence="4">Belongs to the glutaredoxin family. CC-type subfamily.</text>
</comment>
<gene>
    <name type="primary">GRXS5</name>
    <name type="synonym">ROXY12</name>
    <name type="ordered locus">At4g15690</name>
    <name type="ORF">dl3885w</name>
    <name type="ORF">FCAALL.357</name>
</gene>
<proteinExistence type="inferred from homology"/>
<organism>
    <name type="scientific">Arabidopsis thaliana</name>
    <name type="common">Mouse-ear cress</name>
    <dbReference type="NCBI Taxonomy" id="3702"/>
    <lineage>
        <taxon>Eukaryota</taxon>
        <taxon>Viridiplantae</taxon>
        <taxon>Streptophyta</taxon>
        <taxon>Embryophyta</taxon>
        <taxon>Tracheophyta</taxon>
        <taxon>Spermatophyta</taxon>
        <taxon>Magnoliopsida</taxon>
        <taxon>eudicotyledons</taxon>
        <taxon>Gunneridae</taxon>
        <taxon>Pentapetalae</taxon>
        <taxon>rosids</taxon>
        <taxon>malvids</taxon>
        <taxon>Brassicales</taxon>
        <taxon>Brassicaceae</taxon>
        <taxon>Camelineae</taxon>
        <taxon>Arabidopsis</taxon>
    </lineage>
</organism>
<protein>
    <recommendedName>
        <fullName>Monothiol glutaredoxin-S5</fullName>
        <shortName>AtGrxS5</shortName>
    </recommendedName>
    <alternativeName>
        <fullName>Protein ROXY 12</fullName>
    </alternativeName>
</protein>
<dbReference type="EMBL" id="FJ611912">
    <property type="protein sequence ID" value="ACO50417.1"/>
    <property type="molecule type" value="mRNA"/>
</dbReference>
<dbReference type="EMBL" id="Z97339">
    <property type="protein sequence ID" value="CAB10347.1"/>
    <property type="molecule type" value="Genomic_DNA"/>
</dbReference>
<dbReference type="EMBL" id="AL161542">
    <property type="protein sequence ID" value="CAB78611.1"/>
    <property type="molecule type" value="Genomic_DNA"/>
</dbReference>
<dbReference type="EMBL" id="CP002687">
    <property type="protein sequence ID" value="AEE83636.1"/>
    <property type="molecule type" value="Genomic_DNA"/>
</dbReference>
<dbReference type="EMBL" id="BT010811">
    <property type="protein sequence ID" value="AAR24178.1"/>
    <property type="molecule type" value="mRNA"/>
</dbReference>
<dbReference type="EMBL" id="BT011293">
    <property type="protein sequence ID" value="AAR92329.1"/>
    <property type="molecule type" value="mRNA"/>
</dbReference>
<dbReference type="PIR" id="A71422">
    <property type="entry name" value="A71422"/>
</dbReference>
<dbReference type="RefSeq" id="NP_193304.1">
    <property type="nucleotide sequence ID" value="NM_117660.3"/>
</dbReference>
<dbReference type="SMR" id="O23420"/>
<dbReference type="BioGRID" id="12540">
    <property type="interactions" value="1"/>
</dbReference>
<dbReference type="FunCoup" id="O23420">
    <property type="interactions" value="27"/>
</dbReference>
<dbReference type="STRING" id="3702.O23420"/>
<dbReference type="PaxDb" id="3702-AT4G15690.1"/>
<dbReference type="EnsemblPlants" id="AT4G15690.1">
    <property type="protein sequence ID" value="AT4G15690.1"/>
    <property type="gene ID" value="AT4G15690"/>
</dbReference>
<dbReference type="GeneID" id="827246"/>
<dbReference type="Gramene" id="AT4G15690.1">
    <property type="protein sequence ID" value="AT4G15690.1"/>
    <property type="gene ID" value="AT4G15690"/>
</dbReference>
<dbReference type="KEGG" id="ath:AT4G15690"/>
<dbReference type="Araport" id="AT4G15690"/>
<dbReference type="TAIR" id="AT4G15690">
    <property type="gene designation" value="GRXS5"/>
</dbReference>
<dbReference type="eggNOG" id="KOG1752">
    <property type="taxonomic scope" value="Eukaryota"/>
</dbReference>
<dbReference type="HOGENOM" id="CLU_026126_6_0_1"/>
<dbReference type="InParanoid" id="O23420"/>
<dbReference type="OMA" id="IFAHINH"/>
<dbReference type="OrthoDB" id="1033734at2759"/>
<dbReference type="PhylomeDB" id="O23420"/>
<dbReference type="PRO" id="PR:O23420"/>
<dbReference type="Proteomes" id="UP000006548">
    <property type="component" value="Chromosome 4"/>
</dbReference>
<dbReference type="ExpressionAtlas" id="O23420">
    <property type="expression patterns" value="baseline and differential"/>
</dbReference>
<dbReference type="GO" id="GO:0005829">
    <property type="term" value="C:cytosol"/>
    <property type="evidence" value="ECO:0000314"/>
    <property type="project" value="TAIR"/>
</dbReference>
<dbReference type="GO" id="GO:0005634">
    <property type="term" value="C:nucleus"/>
    <property type="evidence" value="ECO:0000314"/>
    <property type="project" value="TAIR"/>
</dbReference>
<dbReference type="GO" id="GO:0051537">
    <property type="term" value="F:2 iron, 2 sulfur cluster binding"/>
    <property type="evidence" value="ECO:0007669"/>
    <property type="project" value="UniProtKB-KW"/>
</dbReference>
<dbReference type="GO" id="GO:0046872">
    <property type="term" value="F:metal ion binding"/>
    <property type="evidence" value="ECO:0007669"/>
    <property type="project" value="UniProtKB-KW"/>
</dbReference>
<dbReference type="GO" id="GO:0000122">
    <property type="term" value="P:negative regulation of transcription by RNA polymerase II"/>
    <property type="evidence" value="ECO:0000314"/>
    <property type="project" value="TAIR"/>
</dbReference>
<dbReference type="GO" id="GO:0010167">
    <property type="term" value="P:response to nitrate"/>
    <property type="evidence" value="ECO:0000270"/>
    <property type="project" value="TAIR"/>
</dbReference>
<dbReference type="CDD" id="cd03419">
    <property type="entry name" value="GRX_GRXh_1_2_like"/>
    <property type="match status" value="1"/>
</dbReference>
<dbReference type="FunFam" id="3.40.30.10:FF:000028">
    <property type="entry name" value="Glutaredoxin family protein"/>
    <property type="match status" value="1"/>
</dbReference>
<dbReference type="Gene3D" id="3.40.30.10">
    <property type="entry name" value="Glutaredoxin"/>
    <property type="match status" value="1"/>
</dbReference>
<dbReference type="InterPro" id="IPR011905">
    <property type="entry name" value="GlrX-like_pln_2"/>
</dbReference>
<dbReference type="InterPro" id="IPR002109">
    <property type="entry name" value="Glutaredoxin"/>
</dbReference>
<dbReference type="InterPro" id="IPR014025">
    <property type="entry name" value="Glutaredoxin_subgr"/>
</dbReference>
<dbReference type="InterPro" id="IPR036249">
    <property type="entry name" value="Thioredoxin-like_sf"/>
</dbReference>
<dbReference type="NCBIfam" id="TIGR02189">
    <property type="entry name" value="GlrX-like_plant"/>
    <property type="match status" value="1"/>
</dbReference>
<dbReference type="PANTHER" id="PTHR10168">
    <property type="entry name" value="GLUTAREDOXIN"/>
    <property type="match status" value="1"/>
</dbReference>
<dbReference type="Pfam" id="PF00462">
    <property type="entry name" value="Glutaredoxin"/>
    <property type="match status" value="1"/>
</dbReference>
<dbReference type="PRINTS" id="PR00160">
    <property type="entry name" value="GLUTAREDOXIN"/>
</dbReference>
<dbReference type="SUPFAM" id="SSF52833">
    <property type="entry name" value="Thioredoxin-like"/>
    <property type="match status" value="1"/>
</dbReference>
<dbReference type="PROSITE" id="PS51354">
    <property type="entry name" value="GLUTAREDOXIN_2"/>
    <property type="match status" value="1"/>
</dbReference>
<sequence>MENLQKMISEKSVVIFSKNSCCMSHTIKTLFLDFGVNPTIYELDEINIGREIEQALAQLGCSPTVPVVFIGGQLVGGANQVMSLHLNRSLVPMLKRAGALWL</sequence>
<evidence type="ECO:0000250" key="1"/>
<evidence type="ECO:0000255" key="2"/>
<evidence type="ECO:0000255" key="3">
    <source>
        <dbReference type="PROSITE-ProRule" id="PRU00686"/>
    </source>
</evidence>
<evidence type="ECO:0000305" key="4"/>
<feature type="chain" id="PRO_0000268726" description="Monothiol glutaredoxin-S5">
    <location>
        <begin position="1"/>
        <end position="102"/>
    </location>
</feature>
<feature type="domain" description="Glutaredoxin" evidence="3">
    <location>
        <begin position="1"/>
        <end position="101"/>
    </location>
</feature>
<feature type="short sequence motif" description="Responsive for interaction with TGA factors" evidence="1">
    <location>
        <begin position="99"/>
        <end position="102"/>
    </location>
</feature>
<feature type="binding site" evidence="2">
    <location>
        <position position="21"/>
    </location>
    <ligand>
        <name>[2Fe-2S] cluster</name>
        <dbReference type="ChEBI" id="CHEBI:190135"/>
        <note>ligand shared between dimeric partners</note>
    </ligand>
</feature>
<keyword id="KW-0001">2Fe-2S</keyword>
<keyword id="KW-0963">Cytoplasm</keyword>
<keyword id="KW-0408">Iron</keyword>
<keyword id="KW-0411">Iron-sulfur</keyword>
<keyword id="KW-0479">Metal-binding</keyword>
<keyword id="KW-0539">Nucleus</keyword>
<keyword id="KW-0676">Redox-active center</keyword>
<keyword id="KW-1185">Reference proteome</keyword>
<reference key="1">
    <citation type="journal article" date="2009" name="Plant Cell">
        <title>Nuclear activity of ROXY1, a glutaredoxin interacting with TGA factors, is required for petal development in Arabidopsis thaliana.</title>
        <authorList>
            <person name="Li S."/>
            <person name="Lauri A."/>
            <person name="Ziemann M."/>
            <person name="Busch A."/>
            <person name="Bhave M."/>
            <person name="Zachgo S."/>
        </authorList>
    </citation>
    <scope>NUCLEOTIDE SEQUENCE [MRNA]</scope>
    <scope>GENE FAMILY</scope>
</reference>
<reference key="2">
    <citation type="journal article" date="1998" name="Nature">
        <title>Analysis of 1.9 Mb of contiguous sequence from chromosome 4 of Arabidopsis thaliana.</title>
        <authorList>
            <person name="Bevan M."/>
            <person name="Bancroft I."/>
            <person name="Bent E."/>
            <person name="Love K."/>
            <person name="Goodman H.M."/>
            <person name="Dean C."/>
            <person name="Bergkamp R."/>
            <person name="Dirkse W."/>
            <person name="van Staveren M."/>
            <person name="Stiekema W."/>
            <person name="Drost L."/>
            <person name="Ridley P."/>
            <person name="Hudson S.-A."/>
            <person name="Patel K."/>
            <person name="Murphy G."/>
            <person name="Piffanelli P."/>
            <person name="Wedler H."/>
            <person name="Wedler E."/>
            <person name="Wambutt R."/>
            <person name="Weitzenegger T."/>
            <person name="Pohl T."/>
            <person name="Terryn N."/>
            <person name="Gielen J."/>
            <person name="Villarroel R."/>
            <person name="De Clercq R."/>
            <person name="van Montagu M."/>
            <person name="Lecharny A."/>
            <person name="Aubourg S."/>
            <person name="Gy I."/>
            <person name="Kreis M."/>
            <person name="Lao N."/>
            <person name="Kavanagh T."/>
            <person name="Hempel S."/>
            <person name="Kotter P."/>
            <person name="Entian K.-D."/>
            <person name="Rieger M."/>
            <person name="Schaefer M."/>
            <person name="Funk B."/>
            <person name="Mueller-Auer S."/>
            <person name="Silvey M."/>
            <person name="James R."/>
            <person name="Monfort A."/>
            <person name="Pons A."/>
            <person name="Puigdomenech P."/>
            <person name="Douka A."/>
            <person name="Voukelatou E."/>
            <person name="Milioni D."/>
            <person name="Hatzopoulos P."/>
            <person name="Piravandi E."/>
            <person name="Obermaier B."/>
            <person name="Hilbert H."/>
            <person name="Duesterhoeft A."/>
            <person name="Moores T."/>
            <person name="Jones J.D.G."/>
            <person name="Eneva T."/>
            <person name="Palme K."/>
            <person name="Benes V."/>
            <person name="Rechmann S."/>
            <person name="Ansorge W."/>
            <person name="Cooke R."/>
            <person name="Berger C."/>
            <person name="Delseny M."/>
            <person name="Voet M."/>
            <person name="Volckaert G."/>
            <person name="Mewes H.-W."/>
            <person name="Klosterman S."/>
            <person name="Schueller C."/>
            <person name="Chalwatzis N."/>
        </authorList>
    </citation>
    <scope>NUCLEOTIDE SEQUENCE [LARGE SCALE GENOMIC DNA]</scope>
    <source>
        <strain>cv. Columbia</strain>
    </source>
</reference>
<reference key="3">
    <citation type="journal article" date="1999" name="Nature">
        <title>Sequence and analysis of chromosome 4 of the plant Arabidopsis thaliana.</title>
        <authorList>
            <person name="Mayer K.F.X."/>
            <person name="Schueller C."/>
            <person name="Wambutt R."/>
            <person name="Murphy G."/>
            <person name="Volckaert G."/>
            <person name="Pohl T."/>
            <person name="Duesterhoeft A."/>
            <person name="Stiekema W."/>
            <person name="Entian K.-D."/>
            <person name="Terryn N."/>
            <person name="Harris B."/>
            <person name="Ansorge W."/>
            <person name="Brandt P."/>
            <person name="Grivell L.A."/>
            <person name="Rieger M."/>
            <person name="Weichselgartner M."/>
            <person name="de Simone V."/>
            <person name="Obermaier B."/>
            <person name="Mache R."/>
            <person name="Mueller M."/>
            <person name="Kreis M."/>
            <person name="Delseny M."/>
            <person name="Puigdomenech P."/>
            <person name="Watson M."/>
            <person name="Schmidtheini T."/>
            <person name="Reichert B."/>
            <person name="Portetelle D."/>
            <person name="Perez-Alonso M."/>
            <person name="Boutry M."/>
            <person name="Bancroft I."/>
            <person name="Vos P."/>
            <person name="Hoheisel J."/>
            <person name="Zimmermann W."/>
            <person name="Wedler H."/>
            <person name="Ridley P."/>
            <person name="Langham S.-A."/>
            <person name="McCullagh B."/>
            <person name="Bilham L."/>
            <person name="Robben J."/>
            <person name="van der Schueren J."/>
            <person name="Grymonprez B."/>
            <person name="Chuang Y.-J."/>
            <person name="Vandenbussche F."/>
            <person name="Braeken M."/>
            <person name="Weltjens I."/>
            <person name="Voet M."/>
            <person name="Bastiaens I."/>
            <person name="Aert R."/>
            <person name="Defoor E."/>
            <person name="Weitzenegger T."/>
            <person name="Bothe G."/>
            <person name="Ramsperger U."/>
            <person name="Hilbert H."/>
            <person name="Braun M."/>
            <person name="Holzer E."/>
            <person name="Brandt A."/>
            <person name="Peters S."/>
            <person name="van Staveren M."/>
            <person name="Dirkse W."/>
            <person name="Mooijman P."/>
            <person name="Klein Lankhorst R."/>
            <person name="Rose M."/>
            <person name="Hauf J."/>
            <person name="Koetter P."/>
            <person name="Berneiser S."/>
            <person name="Hempel S."/>
            <person name="Feldpausch M."/>
            <person name="Lamberth S."/>
            <person name="Van den Daele H."/>
            <person name="De Keyser A."/>
            <person name="Buysshaert C."/>
            <person name="Gielen J."/>
            <person name="Villarroel R."/>
            <person name="De Clercq R."/>
            <person name="van Montagu M."/>
            <person name="Rogers J."/>
            <person name="Cronin A."/>
            <person name="Quail M.A."/>
            <person name="Bray-Allen S."/>
            <person name="Clark L."/>
            <person name="Doggett J."/>
            <person name="Hall S."/>
            <person name="Kay M."/>
            <person name="Lennard N."/>
            <person name="McLay K."/>
            <person name="Mayes R."/>
            <person name="Pettett A."/>
            <person name="Rajandream M.A."/>
            <person name="Lyne M."/>
            <person name="Benes V."/>
            <person name="Rechmann S."/>
            <person name="Borkova D."/>
            <person name="Bloecker H."/>
            <person name="Scharfe M."/>
            <person name="Grimm M."/>
            <person name="Loehnert T.-H."/>
            <person name="Dose S."/>
            <person name="de Haan M."/>
            <person name="Maarse A.C."/>
            <person name="Schaefer M."/>
            <person name="Mueller-Auer S."/>
            <person name="Gabel C."/>
            <person name="Fuchs M."/>
            <person name="Fartmann B."/>
            <person name="Granderath K."/>
            <person name="Dauner D."/>
            <person name="Herzl A."/>
            <person name="Neumann S."/>
            <person name="Argiriou A."/>
            <person name="Vitale D."/>
            <person name="Liguori R."/>
            <person name="Piravandi E."/>
            <person name="Massenet O."/>
            <person name="Quigley F."/>
            <person name="Clabauld G."/>
            <person name="Muendlein A."/>
            <person name="Felber R."/>
            <person name="Schnabl S."/>
            <person name="Hiller R."/>
            <person name="Schmidt W."/>
            <person name="Lecharny A."/>
            <person name="Aubourg S."/>
            <person name="Chefdor F."/>
            <person name="Cooke R."/>
            <person name="Berger C."/>
            <person name="Monfort A."/>
            <person name="Casacuberta E."/>
            <person name="Gibbons T."/>
            <person name="Weber N."/>
            <person name="Vandenbol M."/>
            <person name="Bargues M."/>
            <person name="Terol J."/>
            <person name="Torres A."/>
            <person name="Perez-Perez A."/>
            <person name="Purnelle B."/>
            <person name="Bent E."/>
            <person name="Johnson S."/>
            <person name="Tacon D."/>
            <person name="Jesse T."/>
            <person name="Heijnen L."/>
            <person name="Schwarz S."/>
            <person name="Scholler P."/>
            <person name="Heber S."/>
            <person name="Francs P."/>
            <person name="Bielke C."/>
            <person name="Frishman D."/>
            <person name="Haase D."/>
            <person name="Lemcke K."/>
            <person name="Mewes H.-W."/>
            <person name="Stocker S."/>
            <person name="Zaccaria P."/>
            <person name="Bevan M."/>
            <person name="Wilson R.K."/>
            <person name="de la Bastide M."/>
            <person name="Habermann K."/>
            <person name="Parnell L."/>
            <person name="Dedhia N."/>
            <person name="Gnoj L."/>
            <person name="Schutz K."/>
            <person name="Huang E."/>
            <person name="Spiegel L."/>
            <person name="Sekhon M."/>
            <person name="Murray J."/>
            <person name="Sheet P."/>
            <person name="Cordes M."/>
            <person name="Abu-Threideh J."/>
            <person name="Stoneking T."/>
            <person name="Kalicki J."/>
            <person name="Graves T."/>
            <person name="Harmon G."/>
            <person name="Edwards J."/>
            <person name="Latreille P."/>
            <person name="Courtney L."/>
            <person name="Cloud J."/>
            <person name="Abbott A."/>
            <person name="Scott K."/>
            <person name="Johnson D."/>
            <person name="Minx P."/>
            <person name="Bentley D."/>
            <person name="Fulton B."/>
            <person name="Miller N."/>
            <person name="Greco T."/>
            <person name="Kemp K."/>
            <person name="Kramer J."/>
            <person name="Fulton L."/>
            <person name="Mardis E."/>
            <person name="Dante M."/>
            <person name="Pepin K."/>
            <person name="Hillier L.W."/>
            <person name="Nelson J."/>
            <person name="Spieth J."/>
            <person name="Ryan E."/>
            <person name="Andrews S."/>
            <person name="Geisel C."/>
            <person name="Layman D."/>
            <person name="Du H."/>
            <person name="Ali J."/>
            <person name="Berghoff A."/>
            <person name="Jones K."/>
            <person name="Drone K."/>
            <person name="Cotton M."/>
            <person name="Joshu C."/>
            <person name="Antonoiu B."/>
            <person name="Zidanic M."/>
            <person name="Strong C."/>
            <person name="Sun H."/>
            <person name="Lamar B."/>
            <person name="Yordan C."/>
            <person name="Ma P."/>
            <person name="Zhong J."/>
            <person name="Preston R."/>
            <person name="Vil D."/>
            <person name="Shekher M."/>
            <person name="Matero A."/>
            <person name="Shah R."/>
            <person name="Swaby I.K."/>
            <person name="O'Shaughnessy A."/>
            <person name="Rodriguez M."/>
            <person name="Hoffman J."/>
            <person name="Till S."/>
            <person name="Granat S."/>
            <person name="Shohdy N."/>
            <person name="Hasegawa A."/>
            <person name="Hameed A."/>
            <person name="Lodhi M."/>
            <person name="Johnson A."/>
            <person name="Chen E."/>
            <person name="Marra M.A."/>
            <person name="Martienssen R."/>
            <person name="McCombie W.R."/>
        </authorList>
    </citation>
    <scope>NUCLEOTIDE SEQUENCE [LARGE SCALE GENOMIC DNA]</scope>
    <source>
        <strain>cv. Columbia</strain>
    </source>
</reference>
<reference key="4">
    <citation type="journal article" date="2017" name="Plant J.">
        <title>Araport11: a complete reannotation of the Arabidopsis thaliana reference genome.</title>
        <authorList>
            <person name="Cheng C.Y."/>
            <person name="Krishnakumar V."/>
            <person name="Chan A.P."/>
            <person name="Thibaud-Nissen F."/>
            <person name="Schobel S."/>
            <person name="Town C.D."/>
        </authorList>
    </citation>
    <scope>GENOME REANNOTATION</scope>
    <source>
        <strain>cv. Columbia</strain>
    </source>
</reference>
<reference key="5">
    <citation type="submission" date="2004-01" db="EMBL/GenBank/DDBJ databases">
        <title>Arabidopsis ORF clones.</title>
        <authorList>
            <person name="Cheuk R.F."/>
            <person name="Chen H."/>
            <person name="Kim C.J."/>
            <person name="Shinn P."/>
            <person name="Ecker J.R."/>
        </authorList>
    </citation>
    <scope>NUCLEOTIDE SEQUENCE [LARGE SCALE MRNA]</scope>
    <source>
        <strain>cv. Columbia</strain>
    </source>
</reference>
<reference key="6">
    <citation type="journal article" date="2004" name="Cell. Mol. Life Sci.">
        <title>Plant glutaredoxins: still mysterious reducing systems.</title>
        <authorList>
            <person name="Rouhier N."/>
            <person name="Gelhaye E."/>
            <person name="Jacquot J.-P."/>
        </authorList>
    </citation>
    <scope>GENE FAMILY</scope>
    <scope>NOMENCLATURE</scope>
</reference>
<reference key="7">
    <citation type="journal article" date="2006" name="J. Exp. Bot.">
        <title>Genome-wide analysis of plant glutaredoxin systems.</title>
        <authorList>
            <person name="Rouhier N."/>
            <person name="Couturier J."/>
            <person name="Jacquot J.-P."/>
        </authorList>
    </citation>
    <scope>GENE FAMILY</scope>
</reference>
<name>GRXS5_ARATH</name>
<accession>O23420</accession>
<accession>C1JGQ3</accession>